<gene>
    <name evidence="1" type="primary">pgk</name>
    <name type="ordered locus">NWMN_0742</name>
</gene>
<proteinExistence type="inferred from homology"/>
<keyword id="KW-0067">ATP-binding</keyword>
<keyword id="KW-0963">Cytoplasm</keyword>
<keyword id="KW-0324">Glycolysis</keyword>
<keyword id="KW-0418">Kinase</keyword>
<keyword id="KW-0547">Nucleotide-binding</keyword>
<keyword id="KW-0808">Transferase</keyword>
<comment type="catalytic activity">
    <reaction evidence="1">
        <text>(2R)-3-phosphoglycerate + ATP = (2R)-3-phospho-glyceroyl phosphate + ADP</text>
        <dbReference type="Rhea" id="RHEA:14801"/>
        <dbReference type="ChEBI" id="CHEBI:30616"/>
        <dbReference type="ChEBI" id="CHEBI:57604"/>
        <dbReference type="ChEBI" id="CHEBI:58272"/>
        <dbReference type="ChEBI" id="CHEBI:456216"/>
        <dbReference type="EC" id="2.7.2.3"/>
    </reaction>
</comment>
<comment type="pathway">
    <text evidence="1">Carbohydrate degradation; glycolysis; pyruvate from D-glyceraldehyde 3-phosphate: step 2/5.</text>
</comment>
<comment type="subunit">
    <text evidence="1">Monomer.</text>
</comment>
<comment type="subcellular location">
    <subcellularLocation>
        <location evidence="1">Cytoplasm</location>
    </subcellularLocation>
</comment>
<comment type="similarity">
    <text evidence="1">Belongs to the phosphoglycerate kinase family.</text>
</comment>
<reference key="1">
    <citation type="journal article" date="2008" name="J. Bacteriol.">
        <title>Genome sequence of Staphylococcus aureus strain Newman and comparative analysis of staphylococcal genomes: polymorphism and evolution of two major pathogenicity islands.</title>
        <authorList>
            <person name="Baba T."/>
            <person name="Bae T."/>
            <person name="Schneewind O."/>
            <person name="Takeuchi F."/>
            <person name="Hiramatsu K."/>
        </authorList>
    </citation>
    <scope>NUCLEOTIDE SEQUENCE [LARGE SCALE GENOMIC DNA]</scope>
    <source>
        <strain>Newman</strain>
    </source>
</reference>
<accession>A6QF82</accession>
<name>PGK_STAAE</name>
<feature type="chain" id="PRO_1000071474" description="Phosphoglycerate kinase">
    <location>
        <begin position="1"/>
        <end position="396"/>
    </location>
</feature>
<feature type="binding site" evidence="1">
    <location>
        <begin position="21"/>
        <end position="23"/>
    </location>
    <ligand>
        <name>substrate</name>
    </ligand>
</feature>
<feature type="binding site" evidence="1">
    <location>
        <position position="36"/>
    </location>
    <ligand>
        <name>substrate</name>
    </ligand>
</feature>
<feature type="binding site" evidence="1">
    <location>
        <begin position="59"/>
        <end position="62"/>
    </location>
    <ligand>
        <name>substrate</name>
    </ligand>
</feature>
<feature type="binding site" evidence="1">
    <location>
        <position position="119"/>
    </location>
    <ligand>
        <name>substrate</name>
    </ligand>
</feature>
<feature type="binding site" evidence="1">
    <location>
        <position position="156"/>
    </location>
    <ligand>
        <name>substrate</name>
    </ligand>
</feature>
<feature type="binding site" evidence="1">
    <location>
        <position position="206"/>
    </location>
    <ligand>
        <name>ATP</name>
        <dbReference type="ChEBI" id="CHEBI:30616"/>
    </ligand>
</feature>
<feature type="binding site" evidence="1">
    <location>
        <position position="294"/>
    </location>
    <ligand>
        <name>ATP</name>
        <dbReference type="ChEBI" id="CHEBI:30616"/>
    </ligand>
</feature>
<feature type="binding site" evidence="1">
    <location>
        <position position="325"/>
    </location>
    <ligand>
        <name>ATP</name>
        <dbReference type="ChEBI" id="CHEBI:30616"/>
    </ligand>
</feature>
<feature type="binding site" evidence="1">
    <location>
        <begin position="352"/>
        <end position="355"/>
    </location>
    <ligand>
        <name>ATP</name>
        <dbReference type="ChEBI" id="CHEBI:30616"/>
    </ligand>
</feature>
<protein>
    <recommendedName>
        <fullName evidence="1">Phosphoglycerate kinase</fullName>
        <ecNumber evidence="1">2.7.2.3</ecNumber>
    </recommendedName>
</protein>
<evidence type="ECO:0000255" key="1">
    <source>
        <dbReference type="HAMAP-Rule" id="MF_00145"/>
    </source>
</evidence>
<organism>
    <name type="scientific">Staphylococcus aureus (strain Newman)</name>
    <dbReference type="NCBI Taxonomy" id="426430"/>
    <lineage>
        <taxon>Bacteria</taxon>
        <taxon>Bacillati</taxon>
        <taxon>Bacillota</taxon>
        <taxon>Bacilli</taxon>
        <taxon>Bacillales</taxon>
        <taxon>Staphylococcaceae</taxon>
        <taxon>Staphylococcus</taxon>
    </lineage>
</organism>
<dbReference type="EC" id="2.7.2.3" evidence="1"/>
<dbReference type="EMBL" id="AP009351">
    <property type="protein sequence ID" value="BAF67014.1"/>
    <property type="molecule type" value="Genomic_DNA"/>
</dbReference>
<dbReference type="RefSeq" id="WP_001074749.1">
    <property type="nucleotide sequence ID" value="NZ_JBBIAE010000002.1"/>
</dbReference>
<dbReference type="SMR" id="A6QF82"/>
<dbReference type="KEGG" id="sae:NWMN_0742"/>
<dbReference type="HOGENOM" id="CLU_025427_0_2_9"/>
<dbReference type="UniPathway" id="UPA00109">
    <property type="reaction ID" value="UER00185"/>
</dbReference>
<dbReference type="Proteomes" id="UP000006386">
    <property type="component" value="Chromosome"/>
</dbReference>
<dbReference type="GO" id="GO:0005829">
    <property type="term" value="C:cytosol"/>
    <property type="evidence" value="ECO:0007669"/>
    <property type="project" value="TreeGrafter"/>
</dbReference>
<dbReference type="GO" id="GO:0043531">
    <property type="term" value="F:ADP binding"/>
    <property type="evidence" value="ECO:0007669"/>
    <property type="project" value="TreeGrafter"/>
</dbReference>
<dbReference type="GO" id="GO:0005524">
    <property type="term" value="F:ATP binding"/>
    <property type="evidence" value="ECO:0007669"/>
    <property type="project" value="UniProtKB-KW"/>
</dbReference>
<dbReference type="GO" id="GO:0004618">
    <property type="term" value="F:phosphoglycerate kinase activity"/>
    <property type="evidence" value="ECO:0007669"/>
    <property type="project" value="UniProtKB-UniRule"/>
</dbReference>
<dbReference type="GO" id="GO:0006094">
    <property type="term" value="P:gluconeogenesis"/>
    <property type="evidence" value="ECO:0007669"/>
    <property type="project" value="TreeGrafter"/>
</dbReference>
<dbReference type="GO" id="GO:0006096">
    <property type="term" value="P:glycolytic process"/>
    <property type="evidence" value="ECO:0007669"/>
    <property type="project" value="UniProtKB-UniRule"/>
</dbReference>
<dbReference type="CDD" id="cd00318">
    <property type="entry name" value="Phosphoglycerate_kinase"/>
    <property type="match status" value="1"/>
</dbReference>
<dbReference type="FunFam" id="3.40.50.1260:FF:000001">
    <property type="entry name" value="Phosphoglycerate kinase"/>
    <property type="match status" value="1"/>
</dbReference>
<dbReference type="FunFam" id="3.40.50.1260:FF:000008">
    <property type="entry name" value="Phosphoglycerate kinase"/>
    <property type="match status" value="1"/>
</dbReference>
<dbReference type="Gene3D" id="3.40.50.1260">
    <property type="entry name" value="Phosphoglycerate kinase, N-terminal domain"/>
    <property type="match status" value="2"/>
</dbReference>
<dbReference type="HAMAP" id="MF_00145">
    <property type="entry name" value="Phosphoglyc_kinase"/>
    <property type="match status" value="1"/>
</dbReference>
<dbReference type="InterPro" id="IPR001576">
    <property type="entry name" value="Phosphoglycerate_kinase"/>
</dbReference>
<dbReference type="InterPro" id="IPR015911">
    <property type="entry name" value="Phosphoglycerate_kinase_CS"/>
</dbReference>
<dbReference type="InterPro" id="IPR015824">
    <property type="entry name" value="Phosphoglycerate_kinase_N"/>
</dbReference>
<dbReference type="InterPro" id="IPR036043">
    <property type="entry name" value="Phosphoglycerate_kinase_sf"/>
</dbReference>
<dbReference type="PANTHER" id="PTHR11406">
    <property type="entry name" value="PHOSPHOGLYCERATE KINASE"/>
    <property type="match status" value="1"/>
</dbReference>
<dbReference type="PANTHER" id="PTHR11406:SF23">
    <property type="entry name" value="PHOSPHOGLYCERATE KINASE 1, CHLOROPLASTIC-RELATED"/>
    <property type="match status" value="1"/>
</dbReference>
<dbReference type="Pfam" id="PF00162">
    <property type="entry name" value="PGK"/>
    <property type="match status" value="1"/>
</dbReference>
<dbReference type="PIRSF" id="PIRSF000724">
    <property type="entry name" value="Pgk"/>
    <property type="match status" value="1"/>
</dbReference>
<dbReference type="PRINTS" id="PR00477">
    <property type="entry name" value="PHGLYCKINASE"/>
</dbReference>
<dbReference type="SUPFAM" id="SSF53748">
    <property type="entry name" value="Phosphoglycerate kinase"/>
    <property type="match status" value="1"/>
</dbReference>
<dbReference type="PROSITE" id="PS00111">
    <property type="entry name" value="PGLYCERATE_KINASE"/>
    <property type="match status" value="1"/>
</dbReference>
<sequence>MAKKIVSDLDLKGKTVLVRADFNVPLKDGEITNDNRIVQALPTIQYIIEQGGKIVLFSHLGKVKEESDKAKLTLRPVAEDLSKKLDKEVVFVPETRGEKLEAAIKDLKEGDVLLVENTRYEDLDGKKESKNDPELGKYWASLGDVFVNDAFGTAHREHASNVGISTHLETAAGFLMDKEIKFIGGVVNDPHKPVVAILGGAKVSDKINVIKNLVNIADKIIIGGGMAYTFLKAQGKEIGISLLEEDKIDFAKDLLEKHGDKIVLPVDTKVAKEFSNDAKITVVPSDSIPADQEGMDIGPNTVKLFADELEGAHTVVWNGPMGVFEFSNFAQGTIGVCKAIANLKDAITIIGGGDSAAAAISLGFENDFTHISTGGGASLEYLEGKELPGIKAINNK</sequence>